<accession>A5G5F6</accession>
<gene>
    <name evidence="1" type="primary">rnhA</name>
    <name type="ordered locus">Gura_2851</name>
</gene>
<organism>
    <name type="scientific">Geotalea uraniireducens (strain Rf4)</name>
    <name type="common">Geobacter uraniireducens</name>
    <dbReference type="NCBI Taxonomy" id="351605"/>
    <lineage>
        <taxon>Bacteria</taxon>
        <taxon>Pseudomonadati</taxon>
        <taxon>Thermodesulfobacteriota</taxon>
        <taxon>Desulfuromonadia</taxon>
        <taxon>Geobacterales</taxon>
        <taxon>Geobacteraceae</taxon>
        <taxon>Geotalea</taxon>
    </lineage>
</organism>
<reference key="1">
    <citation type="submission" date="2007-05" db="EMBL/GenBank/DDBJ databases">
        <title>Complete sequence of Geobacter uraniireducens Rf4.</title>
        <authorList>
            <consortium name="US DOE Joint Genome Institute"/>
            <person name="Copeland A."/>
            <person name="Lucas S."/>
            <person name="Lapidus A."/>
            <person name="Barry K."/>
            <person name="Detter J.C."/>
            <person name="Glavina del Rio T."/>
            <person name="Hammon N."/>
            <person name="Israni S."/>
            <person name="Dalin E."/>
            <person name="Tice H."/>
            <person name="Pitluck S."/>
            <person name="Chertkov O."/>
            <person name="Brettin T."/>
            <person name="Bruce D."/>
            <person name="Han C."/>
            <person name="Schmutz J."/>
            <person name="Larimer F."/>
            <person name="Land M."/>
            <person name="Hauser L."/>
            <person name="Kyrpides N."/>
            <person name="Mikhailova N."/>
            <person name="Shelobolina E."/>
            <person name="Aklujkar M."/>
            <person name="Lovley D."/>
            <person name="Richardson P."/>
        </authorList>
    </citation>
    <scope>NUCLEOTIDE SEQUENCE [LARGE SCALE GENOMIC DNA]</scope>
    <source>
        <strain>ATCC BAA-1134 / JCM 13001 / Rf4</strain>
    </source>
</reference>
<dbReference type="EC" id="3.1.26.4" evidence="1"/>
<dbReference type="EMBL" id="CP000698">
    <property type="protein sequence ID" value="ABQ27024.1"/>
    <property type="molecule type" value="Genomic_DNA"/>
</dbReference>
<dbReference type="RefSeq" id="WP_011939698.1">
    <property type="nucleotide sequence ID" value="NC_009483.1"/>
</dbReference>
<dbReference type="SMR" id="A5G5F6"/>
<dbReference type="STRING" id="351605.Gura_2851"/>
<dbReference type="KEGG" id="gur:Gura_2851"/>
<dbReference type="HOGENOM" id="CLU_030894_6_0_7"/>
<dbReference type="OrthoDB" id="7845843at2"/>
<dbReference type="Proteomes" id="UP000006695">
    <property type="component" value="Chromosome"/>
</dbReference>
<dbReference type="GO" id="GO:0005737">
    <property type="term" value="C:cytoplasm"/>
    <property type="evidence" value="ECO:0007669"/>
    <property type="project" value="UniProtKB-SubCell"/>
</dbReference>
<dbReference type="GO" id="GO:0000287">
    <property type="term" value="F:magnesium ion binding"/>
    <property type="evidence" value="ECO:0007669"/>
    <property type="project" value="UniProtKB-UniRule"/>
</dbReference>
<dbReference type="GO" id="GO:0003676">
    <property type="term" value="F:nucleic acid binding"/>
    <property type="evidence" value="ECO:0007669"/>
    <property type="project" value="InterPro"/>
</dbReference>
<dbReference type="GO" id="GO:0004523">
    <property type="term" value="F:RNA-DNA hybrid ribonuclease activity"/>
    <property type="evidence" value="ECO:0007669"/>
    <property type="project" value="UniProtKB-UniRule"/>
</dbReference>
<dbReference type="GO" id="GO:0043137">
    <property type="term" value="P:DNA replication, removal of RNA primer"/>
    <property type="evidence" value="ECO:0007669"/>
    <property type="project" value="TreeGrafter"/>
</dbReference>
<dbReference type="CDD" id="cd09278">
    <property type="entry name" value="RNase_HI_prokaryote_like"/>
    <property type="match status" value="1"/>
</dbReference>
<dbReference type="FunFam" id="3.30.420.10:FF:000089">
    <property type="entry name" value="Ribonuclease H"/>
    <property type="match status" value="1"/>
</dbReference>
<dbReference type="Gene3D" id="3.30.420.10">
    <property type="entry name" value="Ribonuclease H-like superfamily/Ribonuclease H"/>
    <property type="match status" value="1"/>
</dbReference>
<dbReference type="HAMAP" id="MF_00042">
    <property type="entry name" value="RNase_H"/>
    <property type="match status" value="1"/>
</dbReference>
<dbReference type="InterPro" id="IPR050092">
    <property type="entry name" value="RNase_H"/>
</dbReference>
<dbReference type="InterPro" id="IPR012337">
    <property type="entry name" value="RNaseH-like_sf"/>
</dbReference>
<dbReference type="InterPro" id="IPR002156">
    <property type="entry name" value="RNaseH_domain"/>
</dbReference>
<dbReference type="InterPro" id="IPR036397">
    <property type="entry name" value="RNaseH_sf"/>
</dbReference>
<dbReference type="InterPro" id="IPR022892">
    <property type="entry name" value="RNaseHI"/>
</dbReference>
<dbReference type="NCBIfam" id="NF001236">
    <property type="entry name" value="PRK00203.1"/>
    <property type="match status" value="1"/>
</dbReference>
<dbReference type="PANTHER" id="PTHR10642">
    <property type="entry name" value="RIBONUCLEASE H1"/>
    <property type="match status" value="1"/>
</dbReference>
<dbReference type="PANTHER" id="PTHR10642:SF26">
    <property type="entry name" value="RIBONUCLEASE H1"/>
    <property type="match status" value="1"/>
</dbReference>
<dbReference type="Pfam" id="PF00075">
    <property type="entry name" value="RNase_H"/>
    <property type="match status" value="1"/>
</dbReference>
<dbReference type="SUPFAM" id="SSF53098">
    <property type="entry name" value="Ribonuclease H-like"/>
    <property type="match status" value="1"/>
</dbReference>
<dbReference type="PROSITE" id="PS50879">
    <property type="entry name" value="RNASE_H_1"/>
    <property type="match status" value="1"/>
</dbReference>
<name>RNH_GEOUR</name>
<sequence>MKVEIFCDGACSGNPGVGGWGSILRYGDTVKELSGADGDTTNNRMEMTAAIEALASLKRPCEVVLTTDSQYLVKGMTEWMSGWIRKGWVNSKKEPVLNRELWERLLALSKIHKIRWAWVRGHNGHPENERCDELARAAIEVFKGRKP</sequence>
<keyword id="KW-0963">Cytoplasm</keyword>
<keyword id="KW-0255">Endonuclease</keyword>
<keyword id="KW-0378">Hydrolase</keyword>
<keyword id="KW-0460">Magnesium</keyword>
<keyword id="KW-0479">Metal-binding</keyword>
<keyword id="KW-0540">Nuclease</keyword>
<keyword id="KW-1185">Reference proteome</keyword>
<proteinExistence type="inferred from homology"/>
<feature type="chain" id="PRO_0000332607" description="Ribonuclease H">
    <location>
        <begin position="1"/>
        <end position="147"/>
    </location>
</feature>
<feature type="binding site" evidence="1">
    <location>
        <position position="8"/>
    </location>
    <ligand>
        <name>Mg(2+)</name>
        <dbReference type="ChEBI" id="CHEBI:18420"/>
        <label>1</label>
    </ligand>
</feature>
<feature type="binding site" evidence="1">
    <location>
        <position position="8"/>
    </location>
    <ligand>
        <name>Mg(2+)</name>
        <dbReference type="ChEBI" id="CHEBI:18420"/>
        <label>2</label>
    </ligand>
</feature>
<feature type="binding site" evidence="1">
    <location>
        <position position="46"/>
    </location>
    <ligand>
        <name>Mg(2+)</name>
        <dbReference type="ChEBI" id="CHEBI:18420"/>
        <label>1</label>
    </ligand>
</feature>
<feature type="binding site" evidence="1">
    <location>
        <position position="68"/>
    </location>
    <ligand>
        <name>Mg(2+)</name>
        <dbReference type="ChEBI" id="CHEBI:18420"/>
        <label>1</label>
    </ligand>
</feature>
<feature type="binding site" evidence="1">
    <location>
        <position position="132"/>
    </location>
    <ligand>
        <name>Mg(2+)</name>
        <dbReference type="ChEBI" id="CHEBI:18420"/>
        <label>2</label>
    </ligand>
</feature>
<protein>
    <recommendedName>
        <fullName evidence="1">Ribonuclease H</fullName>
        <shortName evidence="1">RNase H</shortName>
        <ecNumber evidence="1">3.1.26.4</ecNumber>
    </recommendedName>
</protein>
<evidence type="ECO:0000255" key="1">
    <source>
        <dbReference type="HAMAP-Rule" id="MF_00042"/>
    </source>
</evidence>
<comment type="function">
    <text evidence="1">Endonuclease that specifically degrades the RNA of RNA-DNA hybrids.</text>
</comment>
<comment type="catalytic activity">
    <reaction evidence="1">
        <text>Endonucleolytic cleavage to 5'-phosphomonoester.</text>
        <dbReference type="EC" id="3.1.26.4"/>
    </reaction>
</comment>
<comment type="cofactor">
    <cofactor evidence="1">
        <name>Mg(2+)</name>
        <dbReference type="ChEBI" id="CHEBI:18420"/>
    </cofactor>
    <text evidence="1">Binds 1 Mg(2+) ion per subunit. May bind a second metal ion at a regulatory site, or after substrate binding.</text>
</comment>
<comment type="subunit">
    <text evidence="1">Monomer.</text>
</comment>
<comment type="subcellular location">
    <subcellularLocation>
        <location evidence="1">Cytoplasm</location>
    </subcellularLocation>
</comment>
<comment type="similarity">
    <text evidence="1">Belongs to the RNase H family.</text>
</comment>